<protein>
    <recommendedName>
        <fullName evidence="1">Acyl carrier protein</fullName>
        <shortName evidence="1">ACP</shortName>
    </recommendedName>
</protein>
<gene>
    <name evidence="1" type="primary">acpP</name>
    <name type="ordered locus">SYNW0143</name>
</gene>
<evidence type="ECO:0000255" key="1">
    <source>
        <dbReference type="HAMAP-Rule" id="MF_01217"/>
    </source>
</evidence>
<evidence type="ECO:0000255" key="2">
    <source>
        <dbReference type="PROSITE-ProRule" id="PRU00258"/>
    </source>
</evidence>
<comment type="function">
    <text evidence="1">Carrier of the growing fatty acid chain in fatty acid biosynthesis.</text>
</comment>
<comment type="pathway">
    <text evidence="1">Lipid metabolism; fatty acid biosynthesis.</text>
</comment>
<comment type="subcellular location">
    <subcellularLocation>
        <location evidence="1">Cytoplasm</location>
    </subcellularLocation>
</comment>
<comment type="PTM">
    <text evidence="1">4'-phosphopantetheine is transferred from CoA to a specific serine of apo-ACP by AcpS. This modification is essential for activity because fatty acids are bound in thioester linkage to the sulfhydryl of the prosthetic group.</text>
</comment>
<comment type="similarity">
    <text evidence="1">Belongs to the acyl carrier protein (ACP) family.</text>
</comment>
<proteinExistence type="inferred from homology"/>
<feature type="chain" id="PRO_0000180206" description="Acyl carrier protein">
    <location>
        <begin position="1"/>
        <end position="80"/>
    </location>
</feature>
<feature type="domain" description="Carrier" evidence="2">
    <location>
        <begin position="4"/>
        <end position="79"/>
    </location>
</feature>
<feature type="modified residue" description="O-(pantetheine 4'-phosphoryl)serine" evidence="2">
    <location>
        <position position="39"/>
    </location>
</feature>
<dbReference type="EMBL" id="BX569689">
    <property type="protein sequence ID" value="CAE06658.1"/>
    <property type="molecule type" value="Genomic_DNA"/>
</dbReference>
<dbReference type="RefSeq" id="WP_007099572.1">
    <property type="nucleotide sequence ID" value="NC_005070.1"/>
</dbReference>
<dbReference type="SMR" id="Q7U9V9"/>
<dbReference type="STRING" id="84588.SYNW0143"/>
<dbReference type="KEGG" id="syw:SYNW0143"/>
<dbReference type="eggNOG" id="COG0236">
    <property type="taxonomic scope" value="Bacteria"/>
</dbReference>
<dbReference type="HOGENOM" id="CLU_108696_5_1_3"/>
<dbReference type="UniPathway" id="UPA00094"/>
<dbReference type="Proteomes" id="UP000001422">
    <property type="component" value="Chromosome"/>
</dbReference>
<dbReference type="GO" id="GO:0005829">
    <property type="term" value="C:cytosol"/>
    <property type="evidence" value="ECO:0007669"/>
    <property type="project" value="TreeGrafter"/>
</dbReference>
<dbReference type="GO" id="GO:0016020">
    <property type="term" value="C:membrane"/>
    <property type="evidence" value="ECO:0007669"/>
    <property type="project" value="GOC"/>
</dbReference>
<dbReference type="GO" id="GO:0000035">
    <property type="term" value="F:acyl binding"/>
    <property type="evidence" value="ECO:0007669"/>
    <property type="project" value="TreeGrafter"/>
</dbReference>
<dbReference type="GO" id="GO:0000036">
    <property type="term" value="F:acyl carrier activity"/>
    <property type="evidence" value="ECO:0007669"/>
    <property type="project" value="UniProtKB-UniRule"/>
</dbReference>
<dbReference type="GO" id="GO:0031177">
    <property type="term" value="F:phosphopantetheine binding"/>
    <property type="evidence" value="ECO:0007669"/>
    <property type="project" value="InterPro"/>
</dbReference>
<dbReference type="GO" id="GO:0009245">
    <property type="term" value="P:lipid A biosynthetic process"/>
    <property type="evidence" value="ECO:0007669"/>
    <property type="project" value="TreeGrafter"/>
</dbReference>
<dbReference type="FunFam" id="1.10.1200.10:FF:000006">
    <property type="entry name" value="Acyl carrier protein"/>
    <property type="match status" value="1"/>
</dbReference>
<dbReference type="Gene3D" id="1.10.1200.10">
    <property type="entry name" value="ACP-like"/>
    <property type="match status" value="1"/>
</dbReference>
<dbReference type="HAMAP" id="MF_01217">
    <property type="entry name" value="Acyl_carrier"/>
    <property type="match status" value="1"/>
</dbReference>
<dbReference type="InterPro" id="IPR003231">
    <property type="entry name" value="ACP"/>
</dbReference>
<dbReference type="InterPro" id="IPR036736">
    <property type="entry name" value="ACP-like_sf"/>
</dbReference>
<dbReference type="InterPro" id="IPR020806">
    <property type="entry name" value="PKS_PP-bd"/>
</dbReference>
<dbReference type="InterPro" id="IPR009081">
    <property type="entry name" value="PP-bd_ACP"/>
</dbReference>
<dbReference type="InterPro" id="IPR006162">
    <property type="entry name" value="Ppantetheine_attach_site"/>
</dbReference>
<dbReference type="NCBIfam" id="TIGR00517">
    <property type="entry name" value="acyl_carrier"/>
    <property type="match status" value="1"/>
</dbReference>
<dbReference type="NCBIfam" id="NF002148">
    <property type="entry name" value="PRK00982.1-2"/>
    <property type="match status" value="1"/>
</dbReference>
<dbReference type="NCBIfam" id="NF002149">
    <property type="entry name" value="PRK00982.1-3"/>
    <property type="match status" value="1"/>
</dbReference>
<dbReference type="NCBIfam" id="NF002150">
    <property type="entry name" value="PRK00982.1-4"/>
    <property type="match status" value="1"/>
</dbReference>
<dbReference type="NCBIfam" id="NF002151">
    <property type="entry name" value="PRK00982.1-5"/>
    <property type="match status" value="1"/>
</dbReference>
<dbReference type="NCBIfam" id="NF009104">
    <property type="entry name" value="PRK12449.1"/>
    <property type="match status" value="1"/>
</dbReference>
<dbReference type="PANTHER" id="PTHR20863">
    <property type="entry name" value="ACYL CARRIER PROTEIN"/>
    <property type="match status" value="1"/>
</dbReference>
<dbReference type="PANTHER" id="PTHR20863:SF76">
    <property type="entry name" value="CARRIER DOMAIN-CONTAINING PROTEIN"/>
    <property type="match status" value="1"/>
</dbReference>
<dbReference type="Pfam" id="PF00550">
    <property type="entry name" value="PP-binding"/>
    <property type="match status" value="1"/>
</dbReference>
<dbReference type="SMART" id="SM00823">
    <property type="entry name" value="PKS_PP"/>
    <property type="match status" value="1"/>
</dbReference>
<dbReference type="SUPFAM" id="SSF47336">
    <property type="entry name" value="ACP-like"/>
    <property type="match status" value="1"/>
</dbReference>
<dbReference type="PROSITE" id="PS50075">
    <property type="entry name" value="CARRIER"/>
    <property type="match status" value="1"/>
</dbReference>
<dbReference type="PROSITE" id="PS00012">
    <property type="entry name" value="PHOSPHOPANTETHEINE"/>
    <property type="match status" value="1"/>
</dbReference>
<reference key="1">
    <citation type="journal article" date="2003" name="Nature">
        <title>The genome of a motile marine Synechococcus.</title>
        <authorList>
            <person name="Palenik B."/>
            <person name="Brahamsha B."/>
            <person name="Larimer F.W."/>
            <person name="Land M.L."/>
            <person name="Hauser L."/>
            <person name="Chain P."/>
            <person name="Lamerdin J.E."/>
            <person name="Regala W."/>
            <person name="Allen E.E."/>
            <person name="McCarren J."/>
            <person name="Paulsen I.T."/>
            <person name="Dufresne A."/>
            <person name="Partensky F."/>
            <person name="Webb E.A."/>
            <person name="Waterbury J."/>
        </authorList>
    </citation>
    <scope>NUCLEOTIDE SEQUENCE [LARGE SCALE GENOMIC DNA]</scope>
    <source>
        <strain>WH8102</strain>
    </source>
</reference>
<organism>
    <name type="scientific">Parasynechococcus marenigrum (strain WH8102)</name>
    <dbReference type="NCBI Taxonomy" id="84588"/>
    <lineage>
        <taxon>Bacteria</taxon>
        <taxon>Bacillati</taxon>
        <taxon>Cyanobacteriota</taxon>
        <taxon>Cyanophyceae</taxon>
        <taxon>Synechococcales</taxon>
        <taxon>Prochlorococcaceae</taxon>
        <taxon>Parasynechococcus</taxon>
        <taxon>Parasynechococcus marenigrum</taxon>
    </lineage>
</organism>
<sequence>MSQEAILEKVRSIVAEQLSVDAGEVKPESNFQNDLGADSLDTVELVMALEEAFDIEIPDEAAEGITTVGDAVKYIEDKQA</sequence>
<name>ACP_PARMW</name>
<keyword id="KW-0963">Cytoplasm</keyword>
<keyword id="KW-0275">Fatty acid biosynthesis</keyword>
<keyword id="KW-0276">Fatty acid metabolism</keyword>
<keyword id="KW-0444">Lipid biosynthesis</keyword>
<keyword id="KW-0443">Lipid metabolism</keyword>
<keyword id="KW-0596">Phosphopantetheine</keyword>
<keyword id="KW-0597">Phosphoprotein</keyword>
<accession>Q7U9V9</accession>